<evidence type="ECO:0000250" key="1"/>
<evidence type="ECO:0000255" key="2"/>
<evidence type="ECO:0000305" key="3"/>
<gene>
    <name type="ordered locus">BT9727_0767</name>
</gene>
<feature type="chain" id="PRO_0000388285" description="UPF0754 membrane protein BT9727_0767">
    <location>
        <begin position="1"/>
        <end position="378"/>
    </location>
</feature>
<feature type="transmembrane region" description="Helical" evidence="2">
    <location>
        <begin position="1"/>
        <end position="21"/>
    </location>
</feature>
<feature type="transmembrane region" description="Helical" evidence="2">
    <location>
        <begin position="357"/>
        <end position="377"/>
    </location>
</feature>
<proteinExistence type="inferred from homology"/>
<keyword id="KW-1003">Cell membrane</keyword>
<keyword id="KW-0472">Membrane</keyword>
<keyword id="KW-0812">Transmembrane</keyword>
<keyword id="KW-1133">Transmembrane helix</keyword>
<reference key="1">
    <citation type="journal article" date="2006" name="J. Bacteriol.">
        <title>Pathogenomic sequence analysis of Bacillus cereus and Bacillus thuringiensis isolates closely related to Bacillus anthracis.</title>
        <authorList>
            <person name="Han C.S."/>
            <person name="Xie G."/>
            <person name="Challacombe J.F."/>
            <person name="Altherr M.R."/>
            <person name="Bhotika S.S."/>
            <person name="Bruce D."/>
            <person name="Campbell C.S."/>
            <person name="Campbell M.L."/>
            <person name="Chen J."/>
            <person name="Chertkov O."/>
            <person name="Cleland C."/>
            <person name="Dimitrijevic M."/>
            <person name="Doggett N.A."/>
            <person name="Fawcett J.J."/>
            <person name="Glavina T."/>
            <person name="Goodwin L.A."/>
            <person name="Hill K.K."/>
            <person name="Hitchcock P."/>
            <person name="Jackson P.J."/>
            <person name="Keim P."/>
            <person name="Kewalramani A.R."/>
            <person name="Longmire J."/>
            <person name="Lucas S."/>
            <person name="Malfatti S."/>
            <person name="McMurry K."/>
            <person name="Meincke L.J."/>
            <person name="Misra M."/>
            <person name="Moseman B.L."/>
            <person name="Mundt M."/>
            <person name="Munk A.C."/>
            <person name="Okinaka R.T."/>
            <person name="Parson-Quintana B."/>
            <person name="Reilly L.P."/>
            <person name="Richardson P."/>
            <person name="Robinson D.L."/>
            <person name="Rubin E."/>
            <person name="Saunders E."/>
            <person name="Tapia R."/>
            <person name="Tesmer J.G."/>
            <person name="Thayer N."/>
            <person name="Thompson L.S."/>
            <person name="Tice H."/>
            <person name="Ticknor L.O."/>
            <person name="Wills P.L."/>
            <person name="Brettin T.S."/>
            <person name="Gilna P."/>
        </authorList>
    </citation>
    <scope>NUCLEOTIDE SEQUENCE [LARGE SCALE GENOMIC DNA]</scope>
    <source>
        <strain>97-27</strain>
    </source>
</reference>
<protein>
    <recommendedName>
        <fullName>UPF0754 membrane protein BT9727_0767</fullName>
    </recommendedName>
</protein>
<organism>
    <name type="scientific">Bacillus thuringiensis subsp. konkukian (strain 97-27)</name>
    <dbReference type="NCBI Taxonomy" id="281309"/>
    <lineage>
        <taxon>Bacteria</taxon>
        <taxon>Bacillati</taxon>
        <taxon>Bacillota</taxon>
        <taxon>Bacilli</taxon>
        <taxon>Bacillales</taxon>
        <taxon>Bacillaceae</taxon>
        <taxon>Bacillus</taxon>
        <taxon>Bacillus cereus group</taxon>
    </lineage>
</organism>
<sequence length="378" mass="42837">MNIWLSMLTTTGLGAIIGGFTNHLAIKMLFRPHRPIYIGKFQVPFTPGLIPKRRDELAVQLGKMVVEHLLTPEGIGKKLTNEEFQKGLIHWAQVEVDKVITNEQSLRHMLGKWDVAHVEKEATEKIEQVITEKIQAFLEEYYTYTWEQALPHSVHEKIENAIPNVSAFILKRAIHFFESEEGKSRLSKMIDDFFASRGALLNLVGMFLGNVSVVDRVQPEVIKFLGQDGTKQLLTDVLQKEWEKLKGRDVKELETFVEKEMIVSSILSAVKVEETVSKFLNQSVQQVCEPVRETIIEKVVPGVVTKGLKWGTENVESILHNLHLAEIVQQEVSTFSTERLEELVLSITKNELKMITYLGALLGGMIGIVQGLLLLFLK</sequence>
<dbReference type="EMBL" id="AE017355">
    <property type="protein sequence ID" value="AAT62443.1"/>
    <property type="status" value="ALT_INIT"/>
    <property type="molecule type" value="Genomic_DNA"/>
</dbReference>
<dbReference type="RefSeq" id="WP_139368465.1">
    <property type="nucleotide sequence ID" value="NC_005957.1"/>
</dbReference>
<dbReference type="RefSeq" id="YP_035111.1">
    <property type="nucleotide sequence ID" value="NC_005957.1"/>
</dbReference>
<dbReference type="SMR" id="Q6HMW0"/>
<dbReference type="KEGG" id="btk:BT9727_0767"/>
<dbReference type="PATRIC" id="fig|281309.8.peg.803"/>
<dbReference type="HOGENOM" id="CLU_042384_0_0_9"/>
<dbReference type="Proteomes" id="UP000001301">
    <property type="component" value="Chromosome"/>
</dbReference>
<dbReference type="GO" id="GO:0005886">
    <property type="term" value="C:plasma membrane"/>
    <property type="evidence" value="ECO:0007669"/>
    <property type="project" value="UniProtKB-SubCell"/>
</dbReference>
<dbReference type="InterPro" id="IPR007383">
    <property type="entry name" value="DUF445"/>
</dbReference>
<dbReference type="InterPro" id="IPR016991">
    <property type="entry name" value="UCP032178"/>
</dbReference>
<dbReference type="PANTHER" id="PTHR35791">
    <property type="entry name" value="UPF0754 MEMBRANE PROTEIN YHEB"/>
    <property type="match status" value="1"/>
</dbReference>
<dbReference type="PANTHER" id="PTHR35791:SF1">
    <property type="entry name" value="UPF0754 MEMBRANE PROTEIN YHEB"/>
    <property type="match status" value="1"/>
</dbReference>
<dbReference type="Pfam" id="PF04286">
    <property type="entry name" value="DUF445"/>
    <property type="match status" value="1"/>
</dbReference>
<dbReference type="PIRSF" id="PIRSF032178">
    <property type="entry name" value="UCP032178"/>
    <property type="match status" value="1"/>
</dbReference>
<accession>Q6HMW0</accession>
<comment type="subcellular location">
    <subcellularLocation>
        <location evidence="1">Cell membrane</location>
        <topology evidence="1">Multi-pass membrane protein</topology>
    </subcellularLocation>
</comment>
<comment type="similarity">
    <text evidence="3">Belongs to the UPF0754 family.</text>
</comment>
<comment type="sequence caution" evidence="3">
    <conflict type="erroneous initiation">
        <sequence resource="EMBL-CDS" id="AAT62443"/>
    </conflict>
</comment>
<name>Y767_BACHK</name>